<gene>
    <name type="ordered locus">YG5714_1592</name>
</gene>
<protein>
    <recommendedName>
        <fullName evidence="1">Arginine decarboxylase proenzyme</fullName>
        <shortName evidence="1">ADC</shortName>
        <shortName evidence="1">ArgDC</shortName>
        <ecNumber evidence="1">4.1.1.19</ecNumber>
    </recommendedName>
    <alternativeName>
        <fullName evidence="1">Pyruvoyl-dependent arginine decarboxylase</fullName>
    </alternativeName>
    <component>
        <recommendedName>
            <fullName evidence="1">Arginine decarboxylase beta chain</fullName>
        </recommendedName>
    </component>
    <component>
        <recommendedName>
            <fullName evidence="1">Arginine decarboxylase alpha chain</fullName>
        </recommendedName>
    </component>
</protein>
<keyword id="KW-0068">Autocatalytic cleavage</keyword>
<keyword id="KW-0210">Decarboxylase</keyword>
<keyword id="KW-0456">Lyase</keyword>
<keyword id="KW-0620">Polyamine biosynthesis</keyword>
<keyword id="KW-0670">Pyruvate</keyword>
<keyword id="KW-0704">Schiff base</keyword>
<keyword id="KW-0865">Zymogen</keyword>
<feature type="chain" id="PRO_1000214235" description="Arginine decarboxylase beta chain" evidence="1">
    <location>
        <begin position="1"/>
        <end position="81"/>
    </location>
</feature>
<feature type="chain" id="PRO_1000214236" description="Arginine decarboxylase alpha chain" evidence="1">
    <location>
        <begin position="82"/>
        <end position="134"/>
    </location>
</feature>
<feature type="active site" description="Schiff-base intermediate with substrate; via pyruvic acid" evidence="1">
    <location>
        <position position="82"/>
    </location>
</feature>
<feature type="active site" description="Proton acceptor; for processing activity" evidence="1">
    <location>
        <position position="87"/>
    </location>
</feature>
<feature type="active site" description="Proton donor; for catalytic activity" evidence="1">
    <location>
        <position position="102"/>
    </location>
</feature>
<feature type="site" description="Cleavage (non-hydrolytic); by autolysis" evidence="1">
    <location>
        <begin position="81"/>
        <end position="82"/>
    </location>
</feature>
<feature type="modified residue" description="Pyruvic acid (Ser); by autocatalysis" evidence="1">
    <location>
        <position position="82"/>
    </location>
</feature>
<proteinExistence type="inferred from homology"/>
<name>ARGDC_SACI7</name>
<reference key="1">
    <citation type="journal article" date="2009" name="Proc. Natl. Acad. Sci. U.S.A.">
        <title>Biogeography of the Sulfolobus islandicus pan-genome.</title>
        <authorList>
            <person name="Reno M.L."/>
            <person name="Held N.L."/>
            <person name="Fields C.J."/>
            <person name="Burke P.V."/>
            <person name="Whitaker R.J."/>
        </authorList>
    </citation>
    <scope>NUCLEOTIDE SEQUENCE [LARGE SCALE GENOMIC DNA]</scope>
    <source>
        <strain>Y.G.57.14 / Yellowstone #1</strain>
    </source>
</reference>
<organism>
    <name type="scientific">Saccharolobus islandicus (strain Y.G.57.14 / Yellowstone #1)</name>
    <name type="common">Sulfolobus islandicus</name>
    <dbReference type="NCBI Taxonomy" id="439386"/>
    <lineage>
        <taxon>Archaea</taxon>
        <taxon>Thermoproteota</taxon>
        <taxon>Thermoprotei</taxon>
        <taxon>Sulfolobales</taxon>
        <taxon>Sulfolobaceae</taxon>
        <taxon>Saccharolobus</taxon>
    </lineage>
</organism>
<sequence>MSEQEVLQKNNSPEGKEDRIIGKHVFGNLYDIDAERLNDKEFLEKLVLEAVNIAHMKLVEIKAWSFGGKKGGVSVIALVEESHIALHTWNEYNYATLDVYTCGEDSDPQSAFAHIVNALNPKRYQMFYADRSSQ</sequence>
<evidence type="ECO:0000255" key="1">
    <source>
        <dbReference type="HAMAP-Rule" id="MF_01298"/>
    </source>
</evidence>
<dbReference type="EC" id="4.1.1.19" evidence="1"/>
<dbReference type="EMBL" id="CP001403">
    <property type="protein sequence ID" value="ACP45854.1"/>
    <property type="molecule type" value="Genomic_DNA"/>
</dbReference>
<dbReference type="SMR" id="C3NEW5"/>
<dbReference type="KEGG" id="siy:YG5714_1592"/>
<dbReference type="HOGENOM" id="CLU_125470_2_1_2"/>
<dbReference type="UniPathway" id="UPA00186">
    <property type="reaction ID" value="UER00284"/>
</dbReference>
<dbReference type="Proteomes" id="UP000002308">
    <property type="component" value="Chromosome"/>
</dbReference>
<dbReference type="GO" id="GO:0005829">
    <property type="term" value="C:cytosol"/>
    <property type="evidence" value="ECO:0007669"/>
    <property type="project" value="TreeGrafter"/>
</dbReference>
<dbReference type="GO" id="GO:0008792">
    <property type="term" value="F:arginine decarboxylase activity"/>
    <property type="evidence" value="ECO:0007669"/>
    <property type="project" value="UniProtKB-UniRule"/>
</dbReference>
<dbReference type="GO" id="GO:0006527">
    <property type="term" value="P:arginine catabolic process"/>
    <property type="evidence" value="ECO:0007669"/>
    <property type="project" value="UniProtKB-UniRule"/>
</dbReference>
<dbReference type="GO" id="GO:0006596">
    <property type="term" value="P:polyamine biosynthetic process"/>
    <property type="evidence" value="ECO:0007669"/>
    <property type="project" value="UniProtKB-UniRule"/>
</dbReference>
<dbReference type="FunFam" id="3.60.90.10:FF:000005">
    <property type="entry name" value="Arginine decarboxylase proenzyme"/>
    <property type="match status" value="1"/>
</dbReference>
<dbReference type="Gene3D" id="3.60.90.10">
    <property type="entry name" value="S-adenosylmethionine decarboxylase"/>
    <property type="match status" value="1"/>
</dbReference>
<dbReference type="HAMAP" id="MF_00464">
    <property type="entry name" value="AdoMetDC_1"/>
    <property type="match status" value="1"/>
</dbReference>
<dbReference type="HAMAP" id="MF_01298">
    <property type="entry name" value="ArgDC"/>
    <property type="match status" value="1"/>
</dbReference>
<dbReference type="InterPro" id="IPR003826">
    <property type="entry name" value="AdoMetDC_fam_prok"/>
</dbReference>
<dbReference type="InterPro" id="IPR027549">
    <property type="entry name" value="ArgDC"/>
</dbReference>
<dbReference type="InterPro" id="IPR016067">
    <property type="entry name" value="S-AdoMet_deCO2ase_core"/>
</dbReference>
<dbReference type="InterPro" id="IPR017716">
    <property type="entry name" value="S-AdoMet_deCOase_pro-enz"/>
</dbReference>
<dbReference type="NCBIfam" id="TIGR03330">
    <property type="entry name" value="SAM_DCase_Bsu"/>
    <property type="match status" value="1"/>
</dbReference>
<dbReference type="PANTHER" id="PTHR33866">
    <property type="entry name" value="S-ADENOSYLMETHIONINE DECARBOXYLASE PROENZYME"/>
    <property type="match status" value="1"/>
</dbReference>
<dbReference type="PANTHER" id="PTHR33866:SF2">
    <property type="entry name" value="S-ADENOSYLMETHIONINE DECARBOXYLASE PROENZYME"/>
    <property type="match status" value="1"/>
</dbReference>
<dbReference type="Pfam" id="PF02675">
    <property type="entry name" value="AdoMet_dc"/>
    <property type="match status" value="1"/>
</dbReference>
<dbReference type="SUPFAM" id="SSF56276">
    <property type="entry name" value="S-adenosylmethionine decarboxylase"/>
    <property type="match status" value="1"/>
</dbReference>
<accession>C3NEW5</accession>
<comment type="function">
    <text evidence="1">Specifically catalyzes the decarboxylation of L-arginine to agmatine. Has no S-adenosylmethionine decarboxylase (AdoMetDC) activity.</text>
</comment>
<comment type="catalytic activity">
    <reaction evidence="1">
        <text>L-arginine + H(+) = agmatine + CO2</text>
        <dbReference type="Rhea" id="RHEA:17641"/>
        <dbReference type="ChEBI" id="CHEBI:15378"/>
        <dbReference type="ChEBI" id="CHEBI:16526"/>
        <dbReference type="ChEBI" id="CHEBI:32682"/>
        <dbReference type="ChEBI" id="CHEBI:58145"/>
        <dbReference type="EC" id="4.1.1.19"/>
    </reaction>
</comment>
<comment type="cofactor">
    <cofactor evidence="1">
        <name>pyruvate</name>
        <dbReference type="ChEBI" id="CHEBI:15361"/>
    </cofactor>
    <text evidence="1">Binds 1 pyruvoyl group covalently per subunit.</text>
</comment>
<comment type="pathway">
    <text evidence="1">Amine and polyamine biosynthesis; agmatine biosynthesis; agmatine from L-arginine: step 1/1.</text>
</comment>
<comment type="subunit">
    <text evidence="1">Heterooctamer of four alpha and four beta chains arranged as a tetramer of alpha/beta heterodimers.</text>
</comment>
<comment type="PTM">
    <text evidence="1">Is synthesized initially as an inactive proenzyme. Formation of the active enzyme involves a self-maturation process in which the active site pyruvoyl group is generated from an internal serine residue via an autocatalytic post-translational modification. Two non-identical subunits are generated from the proenzyme in this reaction, and the pyruvate is formed at the N-terminus of the alpha chain, which is derived from the carboxyl end of the proenzyme. The post-translation cleavage follows an unusual pathway, termed non-hydrolytic serinolysis, in which the side chain hydroxyl group of the serine supplies its oxygen atom to form the C-terminus of the beta chain, while the remainder of the serine residue undergoes an oxidative deamination to produce ammonia and the pyruvoyl group blocking the N-terminus of the alpha chain.</text>
</comment>
<comment type="similarity">
    <text evidence="1">Belongs to the prokaryotic AdoMetDC family. Type 1 subfamily.</text>
</comment>